<evidence type="ECO:0000250" key="1">
    <source>
        <dbReference type="UniProtKB" id="P01130"/>
    </source>
</evidence>
<evidence type="ECO:0000250" key="2">
    <source>
        <dbReference type="UniProtKB" id="P01131"/>
    </source>
</evidence>
<evidence type="ECO:0000250" key="3">
    <source>
        <dbReference type="UniProtKB" id="P35951"/>
    </source>
</evidence>
<evidence type="ECO:0000255" key="4"/>
<evidence type="ECO:0000255" key="5">
    <source>
        <dbReference type="PROSITE-ProRule" id="PRU00076"/>
    </source>
</evidence>
<evidence type="ECO:0000255" key="6">
    <source>
        <dbReference type="PROSITE-ProRule" id="PRU00124"/>
    </source>
</evidence>
<evidence type="ECO:0000256" key="7">
    <source>
        <dbReference type="SAM" id="MobiDB-lite"/>
    </source>
</evidence>
<evidence type="ECO:0000269" key="8">
    <source>
    </source>
</evidence>
<evidence type="ECO:0000269" key="9">
    <source>
    </source>
</evidence>
<evidence type="ECO:0000305" key="10"/>
<evidence type="ECO:0000312" key="11">
    <source>
        <dbReference type="EMBL" id="AAC17444.1"/>
    </source>
</evidence>
<evidence type="ECO:0000312" key="12">
    <source>
        <dbReference type="EMBL" id="AAD13300.1"/>
    </source>
</evidence>
<keyword id="KW-1003">Cell membrane</keyword>
<keyword id="KW-0153">Cholesterol metabolism</keyword>
<keyword id="KW-0168">Coated pit</keyword>
<keyword id="KW-0225">Disease variant</keyword>
<keyword id="KW-1015">Disulfide bond</keyword>
<keyword id="KW-0245">EGF-like domain</keyword>
<keyword id="KW-0254">Endocytosis</keyword>
<keyword id="KW-0967">Endosome</keyword>
<keyword id="KW-0325">Glycoprotein</keyword>
<keyword id="KW-0333">Golgi apparatus</keyword>
<keyword id="KW-0427">LDL</keyword>
<keyword id="KW-0443">Lipid metabolism</keyword>
<keyword id="KW-0445">Lipid transport</keyword>
<keyword id="KW-0449">Lipoprotein</keyword>
<keyword id="KW-0458">Lysosome</keyword>
<keyword id="KW-0472">Membrane</keyword>
<keyword id="KW-0675">Receptor</keyword>
<keyword id="KW-1185">Reference proteome</keyword>
<keyword id="KW-0677">Repeat</keyword>
<keyword id="KW-0753">Steroid metabolism</keyword>
<keyword id="KW-1207">Sterol metabolism</keyword>
<keyword id="KW-0812">Transmembrane</keyword>
<keyword id="KW-1133">Transmembrane helix</keyword>
<keyword id="KW-0813">Transport</keyword>
<keyword id="KW-0832">Ubl conjugation</keyword>
<reference evidence="10 11" key="1">
    <citation type="journal article" date="1998" name="Am. J. Med. Genet.">
        <title>Identification of a mutation in the low density lipoprotein receptor gene associated with recessive familial hypercholesterolemia in swine.</title>
        <authorList>
            <person name="Hasler-Rapacz J."/>
            <person name="Ellegren H."/>
            <person name="Fridolfsson A.-K."/>
            <person name="Kirkpatrick B."/>
            <person name="Kirk S."/>
            <person name="Andersson L."/>
            <person name="Rapacz J."/>
        </authorList>
    </citation>
    <scope>NUCLEOTIDE SEQUENCE [MRNA] OF 1-801</scope>
    <scope>VARIANT FH CYS-84</scope>
    <source>
        <tissue evidence="11">Liver</tissue>
    </source>
</reference>
<reference evidence="10 12" key="2">
    <citation type="journal article" date="1999" name="J. Lipid Res.">
        <title>Identification of a novel Arg--&gt;Cys mutation in the LDL receptor that contributes to spontaneous hypercholesterolemia in pigs.</title>
        <authorList>
            <person name="Grunwald K.A.A."/>
            <person name="Schueler K."/>
            <person name="Uelmen P.J."/>
            <person name="Lipton B.A."/>
            <person name="Kaiser M."/>
            <person name="Buhman K."/>
            <person name="Attie A.D."/>
        </authorList>
    </citation>
    <scope>NUCLEOTIDE SEQUENCE [MRNA] OF 20-801</scope>
    <scope>VARIANT FH CYS-84</scope>
    <source>
        <tissue evidence="8">Skin fibroblast</tissue>
    </source>
</reference>
<reference key="3">
    <citation type="journal article" date="1993" name="Endocrinology">
        <title>Mechanisms of regulation of ovarian sterol metabolism by insulin-like growth factor type II: in vitro studies with swine granulosa cells.</title>
        <authorList>
            <person name="Garmey J.C."/>
            <person name="Day R.N."/>
            <person name="Day K.H."/>
            <person name="Veldhuis J.D."/>
        </authorList>
    </citation>
    <scope>NUCLEOTIDE SEQUENCE [MRNA] OF 765-811</scope>
    <source>
        <tissue>Corpus luteum</tissue>
    </source>
</reference>
<protein>
    <recommendedName>
        <fullName>Low-density lipoprotein receptor</fullName>
        <shortName>LDL receptor</shortName>
    </recommendedName>
</protein>
<gene>
    <name type="primary">LDLR</name>
</gene>
<proteinExistence type="evidence at protein level"/>
<organism>
    <name type="scientific">Sus scrofa</name>
    <name type="common">Pig</name>
    <dbReference type="NCBI Taxonomy" id="9823"/>
    <lineage>
        <taxon>Eukaryota</taxon>
        <taxon>Metazoa</taxon>
        <taxon>Chordata</taxon>
        <taxon>Craniata</taxon>
        <taxon>Vertebrata</taxon>
        <taxon>Euteleostomi</taxon>
        <taxon>Mammalia</taxon>
        <taxon>Eutheria</taxon>
        <taxon>Laurasiatheria</taxon>
        <taxon>Artiodactyla</taxon>
        <taxon>Suina</taxon>
        <taxon>Suidae</taxon>
        <taxon>Sus</taxon>
    </lineage>
</organism>
<accession>Q28832</accession>
<accession>O62817</accession>
<accession>O77619</accession>
<accession>Q9TV95</accession>
<feature type="chain" id="PRO_0000191076" description="Low-density lipoprotein receptor">
    <location>
        <begin position="1" status="less than"/>
        <end position="811"/>
    </location>
</feature>
<feature type="topological domain" description="Extracellular" evidence="2">
    <location>
        <begin position="1" status="less than"/>
        <end position="743"/>
    </location>
</feature>
<feature type="transmembrane region" description="Helical" evidence="4">
    <location>
        <begin position="744"/>
        <end position="764"/>
    </location>
</feature>
<feature type="topological domain" description="Cytoplasmic" evidence="1">
    <location>
        <begin position="765"/>
        <end position="811"/>
    </location>
</feature>
<feature type="domain" description="LDL-receptor class A 1" evidence="6">
    <location>
        <begin position="1" status="less than"/>
        <end position="33"/>
    </location>
</feature>
<feature type="domain" description="LDL-receptor class A 2" evidence="6">
    <location>
        <begin position="36"/>
        <end position="74"/>
    </location>
</feature>
<feature type="domain" description="LDL-receptor class A 3" evidence="6">
    <location>
        <begin position="77"/>
        <end position="113"/>
    </location>
</feature>
<feature type="domain" description="LDL-receptor class A 4" evidence="6">
    <location>
        <begin position="116"/>
        <end position="154"/>
    </location>
</feature>
<feature type="domain" description="LDL-receptor class A 5" evidence="6">
    <location>
        <begin position="167"/>
        <end position="203"/>
    </location>
</feature>
<feature type="domain" description="LDL-receptor class A 6" evidence="6">
    <location>
        <begin position="206"/>
        <end position="242"/>
    </location>
</feature>
<feature type="domain" description="LDL-receptor class A 7" evidence="6">
    <location>
        <begin position="246"/>
        <end position="285"/>
    </location>
</feature>
<feature type="domain" description="EGF-like 1" evidence="5">
    <location>
        <begin position="285"/>
        <end position="324"/>
    </location>
</feature>
<feature type="domain" description="EGF-like 2; calcium-binding" evidence="5">
    <location>
        <begin position="325"/>
        <end position="357"/>
    </location>
</feature>
<feature type="repeat" description="LDL-receptor class B 1" evidence="4">
    <location>
        <begin position="368"/>
        <end position="409"/>
    </location>
</feature>
<feature type="repeat" description="LDL-receptor class B 2">
    <location>
        <begin position="410"/>
        <end position="456"/>
    </location>
</feature>
<feature type="repeat" description="LDL-receptor class B 3">
    <location>
        <begin position="457"/>
        <end position="499"/>
    </location>
</feature>
<feature type="repeat" description="LDL-receptor class B 4">
    <location>
        <begin position="500"/>
        <end position="543"/>
    </location>
</feature>
<feature type="repeat" description="LDL-receptor class B 5" evidence="4">
    <location>
        <begin position="544"/>
        <end position="587"/>
    </location>
</feature>
<feature type="repeat" description="LDL-receptor class B 6">
    <location>
        <begin position="588"/>
        <end position="629"/>
    </location>
</feature>
<feature type="region of interest" description="Disordered" evidence="7">
    <location>
        <begin position="686"/>
        <end position="708"/>
    </location>
</feature>
<feature type="region of interest" description="Clustered O-linked oligosaccharides">
    <location>
        <begin position="692"/>
        <end position="722"/>
    </location>
</feature>
<feature type="region of interest" description="Required for MYLIP-triggered down-regulation of LDLR" evidence="1">
    <location>
        <begin position="765"/>
        <end position="811"/>
    </location>
</feature>
<feature type="short sequence motif" description="NPXY motif" evidence="1">
    <location>
        <begin position="777"/>
        <end position="782"/>
    </location>
</feature>
<feature type="compositionally biased region" description="Polar residues" evidence="7">
    <location>
        <begin position="689"/>
        <end position="708"/>
    </location>
</feature>
<feature type="glycosylation site" description="N-linked (GlcNAc...) asparagine" evidence="4">
    <location>
        <position position="66"/>
    </location>
</feature>
<feature type="glycosylation site" description="N-linked (GlcNAc...) asparagine" evidence="4">
    <location>
        <position position="125"/>
    </location>
</feature>
<feature type="glycosylation site" description="N-linked (GlcNAc...) asparagine" evidence="4">
    <location>
        <position position="243"/>
    </location>
</feature>
<feature type="glycosylation site" description="N-linked (GlcNAc...) asparagine" evidence="4">
    <location>
        <position position="628"/>
    </location>
</feature>
<feature type="glycosylation site" description="N-linked (GlcNAc...) asparagine" evidence="4">
    <location>
        <position position="699"/>
    </location>
</feature>
<feature type="disulfide bond" evidence="1">
    <location>
        <begin position="3"/>
        <end position="21"/>
    </location>
</feature>
<feature type="disulfide bond" evidence="1">
    <location>
        <begin position="15"/>
        <end position="32"/>
    </location>
</feature>
<feature type="disulfide bond" evidence="1">
    <location>
        <begin position="37"/>
        <end position="51"/>
    </location>
</feature>
<feature type="disulfide bond" evidence="1">
    <location>
        <begin position="44"/>
        <end position="64"/>
    </location>
</feature>
<feature type="disulfide bond" evidence="1">
    <location>
        <begin position="58"/>
        <end position="73"/>
    </location>
</feature>
<feature type="disulfide bond" evidence="1">
    <location>
        <begin position="78"/>
        <end position="90"/>
    </location>
</feature>
<feature type="disulfide bond" evidence="1">
    <location>
        <begin position="85"/>
        <end position="103"/>
    </location>
</feature>
<feature type="disulfide bond" evidence="1">
    <location>
        <begin position="97"/>
        <end position="112"/>
    </location>
</feature>
<feature type="disulfide bond" evidence="1">
    <location>
        <begin position="117"/>
        <end position="129"/>
    </location>
</feature>
<feature type="disulfide bond" evidence="1">
    <location>
        <begin position="124"/>
        <end position="142"/>
    </location>
</feature>
<feature type="disulfide bond" evidence="1">
    <location>
        <begin position="136"/>
        <end position="153"/>
    </location>
</feature>
<feature type="disulfide bond" evidence="1">
    <location>
        <begin position="168"/>
        <end position="180"/>
    </location>
</feature>
<feature type="disulfide bond" evidence="1">
    <location>
        <begin position="175"/>
        <end position="193"/>
    </location>
</feature>
<feature type="disulfide bond" evidence="1">
    <location>
        <begin position="187"/>
        <end position="202"/>
    </location>
</feature>
<feature type="disulfide bond" evidence="1">
    <location>
        <begin position="207"/>
        <end position="219"/>
    </location>
</feature>
<feature type="disulfide bond" evidence="1">
    <location>
        <begin position="214"/>
        <end position="232"/>
    </location>
</feature>
<feature type="disulfide bond" evidence="1">
    <location>
        <begin position="226"/>
        <end position="241"/>
    </location>
</feature>
<feature type="disulfide bond" evidence="1">
    <location>
        <begin position="247"/>
        <end position="260"/>
    </location>
</feature>
<feature type="disulfide bond" evidence="1">
    <location>
        <begin position="255"/>
        <end position="273"/>
    </location>
</feature>
<feature type="disulfide bond" evidence="1">
    <location>
        <begin position="267"/>
        <end position="284"/>
    </location>
</feature>
<feature type="disulfide bond" evidence="1">
    <location>
        <begin position="289"/>
        <end position="300"/>
    </location>
</feature>
<feature type="disulfide bond" evidence="1">
    <location>
        <begin position="296"/>
        <end position="309"/>
    </location>
</feature>
<feature type="disulfide bond" evidence="1">
    <location>
        <begin position="311"/>
        <end position="323"/>
    </location>
</feature>
<feature type="disulfide bond" evidence="1">
    <location>
        <begin position="329"/>
        <end position="339"/>
    </location>
</feature>
<feature type="disulfide bond" evidence="1">
    <location>
        <begin position="335"/>
        <end position="348"/>
    </location>
</feature>
<feature type="disulfide bond" evidence="1">
    <location>
        <begin position="350"/>
        <end position="363"/>
    </location>
</feature>
<feature type="disulfide bond" evidence="1">
    <location>
        <begin position="638"/>
        <end position="652"/>
    </location>
</feature>
<feature type="disulfide bond" evidence="1">
    <location>
        <begin position="648"/>
        <end position="667"/>
    </location>
</feature>
<feature type="disulfide bond" evidence="1">
    <location>
        <begin position="669"/>
        <end position="682"/>
    </location>
</feature>
<feature type="sequence variant" description="In FH; recessive." evidence="8 9">
    <original>R</original>
    <variation>C</variation>
    <location>
        <position position="84"/>
    </location>
</feature>
<feature type="sequence conflict" description="In Ref. 2; AAD13300." evidence="10" ref="2">
    <original>M</original>
    <variation>L</variation>
    <location>
        <position position="235"/>
    </location>
</feature>
<feature type="sequence conflict" description="In Ref. 2; AAD13300." evidence="10" ref="2">
    <original>A</original>
    <variation>V</variation>
    <location>
        <position position="244"/>
    </location>
</feature>
<feature type="sequence conflict" description="In Ref. 2; AAD13300." evidence="10" ref="2">
    <original>D</original>
    <variation>N</variation>
    <location>
        <position position="428"/>
    </location>
</feature>
<feature type="sequence conflict" description="In Ref. 2; AAD13300." evidence="10" ref="2">
    <original>I</original>
    <variation>V</variation>
    <location>
        <position position="594"/>
    </location>
</feature>
<feature type="non-terminal residue">
    <location>
        <position position="1"/>
    </location>
</feature>
<comment type="function">
    <text evidence="1">Binds low density lipoprotein /LDL, the major cholesterol-carrying lipoprotein of plasma, and transports it into cells by endocytosis. In order to be internalized, the receptor-ligand complexes must first cluster into clathrin-coated pits. Forms a ternary complex with PGRMC1 and TMEM97 receptors which increases LDLR-mediated LDL internalization.</text>
</comment>
<comment type="subunit">
    <text evidence="1 3">Interacts (via NPXY motif) with DAB2 (via PID domain); the interaction is impaired by tyrosine phosphorylation of the NPXY motif (By similarity). Interacts (via NPXY motif) with LDLRAP1 (via PID domain). Interacts with ARRB1. Interacts with SNX17. Interacts with the full-length immature form of PCSK9 (via C-terminus) (By similarity). Interacts with PGRMC1 and TMEM97; the interaction increases LDL internalization (By similarity).</text>
</comment>
<comment type="subcellular location">
    <subcellularLocation>
        <location evidence="1">Cell membrane</location>
        <topology evidence="2">Single-pass type I membrane protein</topology>
    </subcellularLocation>
    <subcellularLocation>
        <location evidence="1">Membrane</location>
        <location evidence="1">Clathrin-coated pit</location>
    </subcellularLocation>
    <subcellularLocation>
        <location evidence="1">Golgi apparatus</location>
    </subcellularLocation>
    <subcellularLocation>
        <location evidence="1">Early endosome</location>
    </subcellularLocation>
    <subcellularLocation>
        <location evidence="1">Late endosome</location>
    </subcellularLocation>
    <subcellularLocation>
        <location evidence="1">Lysosome</location>
    </subcellularLocation>
    <text evidence="1">Rapidly endocytosed upon ligand binding.</text>
</comment>
<comment type="domain">
    <text evidence="1">The NPXY motif mediates the interaction with the clathrin adapter DAB2 and with LDLRAP1 which are involved in receptor internalization. A few residues outside the motif also play a role in the interaction.</text>
</comment>
<comment type="PTM">
    <text evidence="1">N- and O-glycosylated.</text>
</comment>
<comment type="PTM">
    <text evidence="1">Ubiquitinated by MYLIP leading to degradation.</text>
</comment>
<comment type="disease">
    <text evidence="8 9">Defects in LDLR are the cause of familial hypercholesterolemia (FH).</text>
</comment>
<comment type="similarity">
    <text evidence="10">Belongs to the LDLR family.</text>
</comment>
<dbReference type="EMBL" id="AF065990">
    <property type="protein sequence ID" value="AAC17444.1"/>
    <property type="molecule type" value="mRNA"/>
</dbReference>
<dbReference type="EMBL" id="AF067952">
    <property type="protein sequence ID" value="AAC39254.1"/>
    <property type="molecule type" value="mRNA"/>
</dbReference>
<dbReference type="EMBL" id="AF118147">
    <property type="protein sequence ID" value="AAD13300.1"/>
    <property type="molecule type" value="mRNA"/>
</dbReference>
<dbReference type="EMBL" id="S64272">
    <property type="protein sequence ID" value="AAB27716.1"/>
    <property type="molecule type" value="mRNA"/>
</dbReference>
<dbReference type="RefSeq" id="NP_001193283.1">
    <property type="nucleotide sequence ID" value="NM_001206354.2"/>
</dbReference>
<dbReference type="SMR" id="Q28832"/>
<dbReference type="FunCoup" id="Q28832">
    <property type="interactions" value="394"/>
</dbReference>
<dbReference type="STRING" id="9823.ENSSSCP00000070219"/>
<dbReference type="GlyCosmos" id="Q28832">
    <property type="glycosylation" value="5 sites, No reported glycans"/>
</dbReference>
<dbReference type="GlyGen" id="Q28832">
    <property type="glycosylation" value="7 sites"/>
</dbReference>
<dbReference type="PaxDb" id="9823-ENSSSCP00000030589"/>
<dbReference type="GeneID" id="396801"/>
<dbReference type="KEGG" id="ssc:396801"/>
<dbReference type="CTD" id="3949"/>
<dbReference type="eggNOG" id="KOG1215">
    <property type="taxonomic scope" value="Eukaryota"/>
</dbReference>
<dbReference type="HOGENOM" id="CLU_3177973_0_0_1"/>
<dbReference type="InParanoid" id="Q28832"/>
<dbReference type="OrthoDB" id="664115at2759"/>
<dbReference type="Proteomes" id="UP000008227">
    <property type="component" value="Unplaced"/>
</dbReference>
<dbReference type="Proteomes" id="UP000314985">
    <property type="component" value="Unplaced"/>
</dbReference>
<dbReference type="Proteomes" id="UP000694570">
    <property type="component" value="Unplaced"/>
</dbReference>
<dbReference type="Proteomes" id="UP000694571">
    <property type="component" value="Unplaced"/>
</dbReference>
<dbReference type="Proteomes" id="UP000694720">
    <property type="component" value="Unplaced"/>
</dbReference>
<dbReference type="Proteomes" id="UP000694722">
    <property type="component" value="Unplaced"/>
</dbReference>
<dbReference type="Proteomes" id="UP000694723">
    <property type="component" value="Unplaced"/>
</dbReference>
<dbReference type="Proteomes" id="UP000694724">
    <property type="component" value="Unplaced"/>
</dbReference>
<dbReference type="Proteomes" id="UP000694725">
    <property type="component" value="Unplaced"/>
</dbReference>
<dbReference type="Proteomes" id="UP000694726">
    <property type="component" value="Unplaced"/>
</dbReference>
<dbReference type="Proteomes" id="UP000694727">
    <property type="component" value="Unplaced"/>
</dbReference>
<dbReference type="Proteomes" id="UP000694728">
    <property type="component" value="Unplaced"/>
</dbReference>
<dbReference type="GO" id="GO:0009986">
    <property type="term" value="C:cell surface"/>
    <property type="evidence" value="ECO:0000250"/>
    <property type="project" value="UniProtKB"/>
</dbReference>
<dbReference type="GO" id="GO:0005905">
    <property type="term" value="C:clathrin-coated pit"/>
    <property type="evidence" value="ECO:0007669"/>
    <property type="project" value="UniProtKB-SubCell"/>
</dbReference>
<dbReference type="GO" id="GO:0005769">
    <property type="term" value="C:early endosome"/>
    <property type="evidence" value="ECO:0000250"/>
    <property type="project" value="UniProtKB"/>
</dbReference>
<dbReference type="GO" id="GO:0005794">
    <property type="term" value="C:Golgi apparatus"/>
    <property type="evidence" value="ECO:0000250"/>
    <property type="project" value="UniProtKB"/>
</dbReference>
<dbReference type="GO" id="GO:0005770">
    <property type="term" value="C:late endosome"/>
    <property type="evidence" value="ECO:0000250"/>
    <property type="project" value="UniProtKB"/>
</dbReference>
<dbReference type="GO" id="GO:0034362">
    <property type="term" value="C:low-density lipoprotein particle"/>
    <property type="evidence" value="ECO:0007669"/>
    <property type="project" value="UniProtKB-KW"/>
</dbReference>
<dbReference type="GO" id="GO:0005764">
    <property type="term" value="C:lysosome"/>
    <property type="evidence" value="ECO:0000250"/>
    <property type="project" value="UniProtKB"/>
</dbReference>
<dbReference type="GO" id="GO:0005886">
    <property type="term" value="C:plasma membrane"/>
    <property type="evidence" value="ECO:0000318"/>
    <property type="project" value="GO_Central"/>
</dbReference>
<dbReference type="GO" id="GO:0005509">
    <property type="term" value="F:calcium ion binding"/>
    <property type="evidence" value="ECO:0007669"/>
    <property type="project" value="InterPro"/>
</dbReference>
<dbReference type="GO" id="GO:0071813">
    <property type="term" value="F:lipoprotein particle binding"/>
    <property type="evidence" value="ECO:0000318"/>
    <property type="project" value="GO_Central"/>
</dbReference>
<dbReference type="GO" id="GO:0005041">
    <property type="term" value="F:low-density lipoprotein particle receptor activity"/>
    <property type="evidence" value="ECO:0000318"/>
    <property type="project" value="GO_Central"/>
</dbReference>
<dbReference type="GO" id="GO:0042632">
    <property type="term" value="P:cholesterol homeostasis"/>
    <property type="evidence" value="ECO:0000318"/>
    <property type="project" value="GO_Central"/>
</dbReference>
<dbReference type="GO" id="GO:0008203">
    <property type="term" value="P:cholesterol metabolic process"/>
    <property type="evidence" value="ECO:0007669"/>
    <property type="project" value="UniProtKB-KW"/>
</dbReference>
<dbReference type="GO" id="GO:0090118">
    <property type="term" value="P:receptor-mediated endocytosis involved in cholesterol transport"/>
    <property type="evidence" value="ECO:0000318"/>
    <property type="project" value="GO_Central"/>
</dbReference>
<dbReference type="GO" id="GO:0045056">
    <property type="term" value="P:transcytosis"/>
    <property type="evidence" value="ECO:0000315"/>
    <property type="project" value="AgBase"/>
</dbReference>
<dbReference type="CDD" id="cd00054">
    <property type="entry name" value="EGF_CA"/>
    <property type="match status" value="1"/>
</dbReference>
<dbReference type="CDD" id="cd00112">
    <property type="entry name" value="LDLa"/>
    <property type="match status" value="7"/>
</dbReference>
<dbReference type="FunFam" id="4.10.400.10:FF:000072">
    <property type="entry name" value="Low density lipoprotein receptor"/>
    <property type="match status" value="1"/>
</dbReference>
<dbReference type="FunFam" id="4.10.400.10:FF:000084">
    <property type="entry name" value="Low density lipoprotein receptor"/>
    <property type="match status" value="1"/>
</dbReference>
<dbReference type="FunFam" id="4.10.400.10:FF:000124">
    <property type="entry name" value="Low density lipoprotein receptor"/>
    <property type="match status" value="1"/>
</dbReference>
<dbReference type="FunFam" id="4.10.400.10:FF:000116">
    <property type="entry name" value="Low-density lipoprotein receptor"/>
    <property type="match status" value="1"/>
</dbReference>
<dbReference type="FunFam" id="2.10.25.10:FF:000009">
    <property type="entry name" value="Low-density lipoprotein receptor isoform 1"/>
    <property type="match status" value="1"/>
</dbReference>
<dbReference type="FunFam" id="2.10.25.10:FF:000052">
    <property type="entry name" value="low-density lipoprotein receptor isoform X1"/>
    <property type="match status" value="1"/>
</dbReference>
<dbReference type="FunFam" id="2.120.10.30:FF:000002">
    <property type="entry name" value="low-density lipoprotein receptor isoform X1"/>
    <property type="match status" value="1"/>
</dbReference>
<dbReference type="FunFam" id="4.10.400.10:FF:000113">
    <property type="entry name" value="Low-density lipoprotein receptor-related protein 8"/>
    <property type="match status" value="1"/>
</dbReference>
<dbReference type="FunFam" id="4.10.400.10:FF:000006">
    <property type="entry name" value="Putative low-density lipoprotein receptor"/>
    <property type="match status" value="1"/>
</dbReference>
<dbReference type="Gene3D" id="4.10.1220.10">
    <property type="entry name" value="EGF-type module"/>
    <property type="match status" value="1"/>
</dbReference>
<dbReference type="Gene3D" id="2.10.25.10">
    <property type="entry name" value="Laminin"/>
    <property type="match status" value="3"/>
</dbReference>
<dbReference type="Gene3D" id="4.10.400.10">
    <property type="entry name" value="Low-density Lipoprotein Receptor"/>
    <property type="match status" value="6"/>
</dbReference>
<dbReference type="Gene3D" id="2.120.10.30">
    <property type="entry name" value="TolB, C-terminal domain"/>
    <property type="match status" value="1"/>
</dbReference>
<dbReference type="InterPro" id="IPR011042">
    <property type="entry name" value="6-blade_b-propeller_TolB-like"/>
</dbReference>
<dbReference type="InterPro" id="IPR001881">
    <property type="entry name" value="EGF-like_Ca-bd_dom"/>
</dbReference>
<dbReference type="InterPro" id="IPR000742">
    <property type="entry name" value="EGF-like_dom"/>
</dbReference>
<dbReference type="InterPro" id="IPR000152">
    <property type="entry name" value="EGF-type_Asp/Asn_hydroxyl_site"/>
</dbReference>
<dbReference type="InterPro" id="IPR018097">
    <property type="entry name" value="EGF_Ca-bd_CS"/>
</dbReference>
<dbReference type="InterPro" id="IPR009030">
    <property type="entry name" value="Growth_fac_rcpt_cys_sf"/>
</dbReference>
<dbReference type="InterPro" id="IPR036055">
    <property type="entry name" value="LDL_receptor-like_sf"/>
</dbReference>
<dbReference type="InterPro" id="IPR051221">
    <property type="entry name" value="LDLR-related"/>
</dbReference>
<dbReference type="InterPro" id="IPR023415">
    <property type="entry name" value="LDLR_class-A_CS"/>
</dbReference>
<dbReference type="InterPro" id="IPR000033">
    <property type="entry name" value="LDLR_classB_rpt"/>
</dbReference>
<dbReference type="InterPro" id="IPR002172">
    <property type="entry name" value="LDrepeatLR_classA_rpt"/>
</dbReference>
<dbReference type="InterPro" id="IPR049883">
    <property type="entry name" value="NOTCH1_EGF-like"/>
</dbReference>
<dbReference type="PANTHER" id="PTHR22722:SF15">
    <property type="entry name" value="LOW-DENSITY LIPOPROTEIN RECEPTOR-RELATED"/>
    <property type="match status" value="1"/>
</dbReference>
<dbReference type="PANTHER" id="PTHR22722">
    <property type="entry name" value="LOW-DENSITY LIPOPROTEIN RECEPTOR-RELATED PROTEIN 2-RELATED"/>
    <property type="match status" value="1"/>
</dbReference>
<dbReference type="Pfam" id="PF07645">
    <property type="entry name" value="EGF_CA"/>
    <property type="match status" value="1"/>
</dbReference>
<dbReference type="Pfam" id="PF14670">
    <property type="entry name" value="FXa_inhibition"/>
    <property type="match status" value="1"/>
</dbReference>
<dbReference type="Pfam" id="PF00057">
    <property type="entry name" value="Ldl_recept_a"/>
    <property type="match status" value="7"/>
</dbReference>
<dbReference type="Pfam" id="PF00058">
    <property type="entry name" value="Ldl_recept_b"/>
    <property type="match status" value="5"/>
</dbReference>
<dbReference type="PRINTS" id="PR00261">
    <property type="entry name" value="LDLRECEPTOR"/>
</dbReference>
<dbReference type="SMART" id="SM00181">
    <property type="entry name" value="EGF"/>
    <property type="match status" value="4"/>
</dbReference>
<dbReference type="SMART" id="SM00179">
    <property type="entry name" value="EGF_CA"/>
    <property type="match status" value="2"/>
</dbReference>
<dbReference type="SMART" id="SM00192">
    <property type="entry name" value="LDLa"/>
    <property type="match status" value="7"/>
</dbReference>
<dbReference type="SMART" id="SM00135">
    <property type="entry name" value="LY"/>
    <property type="match status" value="5"/>
</dbReference>
<dbReference type="SUPFAM" id="SSF57184">
    <property type="entry name" value="Growth factor receptor domain"/>
    <property type="match status" value="1"/>
</dbReference>
<dbReference type="SUPFAM" id="SSF57424">
    <property type="entry name" value="LDL receptor-like module"/>
    <property type="match status" value="6"/>
</dbReference>
<dbReference type="SUPFAM" id="SSF63825">
    <property type="entry name" value="YWTD domain"/>
    <property type="match status" value="1"/>
</dbReference>
<dbReference type="PROSITE" id="PS00010">
    <property type="entry name" value="ASX_HYDROXYL"/>
    <property type="match status" value="2"/>
</dbReference>
<dbReference type="PROSITE" id="PS01186">
    <property type="entry name" value="EGF_2"/>
    <property type="match status" value="2"/>
</dbReference>
<dbReference type="PROSITE" id="PS50026">
    <property type="entry name" value="EGF_3"/>
    <property type="match status" value="2"/>
</dbReference>
<dbReference type="PROSITE" id="PS01187">
    <property type="entry name" value="EGF_CA"/>
    <property type="match status" value="1"/>
</dbReference>
<dbReference type="PROSITE" id="PS01209">
    <property type="entry name" value="LDLRA_1"/>
    <property type="match status" value="7"/>
</dbReference>
<dbReference type="PROSITE" id="PS50068">
    <property type="entry name" value="LDLRA_2"/>
    <property type="match status" value="7"/>
</dbReference>
<dbReference type="PROSITE" id="PS51120">
    <property type="entry name" value="LDLRB"/>
    <property type="match status" value="5"/>
</dbReference>
<name>LDLR_PIG</name>
<sequence>FQCQDGKCISYKWICDGNTECKDGSDESLETCMSVTCKIGDFSCGGRVNRCIPESWRCDGQQDCENGSDEEGCSPKTCSQDEFRCQDGKCIAPKFVCDSDRDCLDGSDEASCPTPTCGPASFQCNSSTCIPELWACDGDPDCEDGSDEWPQHCRSHSSSLPERSNNPCSALEFHCHSGECIHSSWRCDGDTDCKDKSDEENCDVATCRPDEFQCSDGTCIHGSRQCDREYDCKDMSDEQGCVNATLCEGPNKFKCQSGECISLDKVCNSVRDCRDWSDEPLKECGTNECLDNKGGCSHICNDLKIGYECLCPEGFQLVDKHRCEDIDECQDPDACSQICVNLEGSYKCQCEEGFQLEPLTKACKAIGTIAYLFFTNRHEVRKMTLDRSEYTSLIPNLKNVVALDTEVASNRIYWSDLSQRKIYSTQIDRAPSFSSYDTIIGEDLQAPDGLAVDWIHSNIYWTDSILGTVSVADTKGVKRKTLFQEKGSKPRAIVVDPVHGFMYWTDWGTPAKIKKGGLNGVDVYSLVTEDIQWPNGITLDLSGGRLYWVDSKLHSISSIDVNGGNRKTVLEDKTKLAHPFSLAIFEDKVFWTDIINEAIFSANRLTGSDIHLMAENLLSPEDIVLFHNLTQPRGVNWCERTALQNGGCQYLCLPAPQINPRSPKFTCACPDGMLLAKDMRSCLTETEPAGTTQGPSMVNSTAVGPKHTASSELTTAESVTMSQHALGDVAGRGVTEKPQSVGALYIVLPIALLILLFFGTFLLWKNWRLKSINSINFDNPVYQKTTEDEVHICRSQDGYTYPSRQMVSLED</sequence>